<accession>B2FK84</accession>
<sequence length="554" mass="61085">MTPLIFVTGGVVSSLGKGIAAASLAAILEARGLKVTMMKLDPYINVDPGTMSPFQHGEVYVTDDGAETDLDLGHYERFVRTRLSRKNSVTTGRIYENVIRKERRGDYLGATVQVIPHITDEIRRCIDEATEGYDVALVEIGGTVGDIESLPFLEAIRQVRTERGPEKALFMHLTLVPYIGAAGELKTKPTQHSVKELRSIGIQPDVLLCRSEQAVPDSERRKIAQFTNVSERAVISVPDVDVLYRIPSGLHAQGLDEIVVNQLKLADKAGPVDLSMWEDAVDATLHPLDEVTIAVVGKYVDHQDAYKSVGEALKHGGLRQRTKVNLKWLEAQDLEGTDMAALADVDGILVPGGFGDRGFEGKVLTSKFAREQQVPYFGICYGMQAAVVDYARNVVGLEGANSTENDRQSPNPVIGLITEWRTATGDVEKRDDKSDLGGTMRLGLQEQRLKPGTLARELYGKDVVAERHRHRYEFNNRYRTQLEDAGLVIAGKSMDDTLVEVVELPRDAHPWFLACQAHPEFLSTPRDGHPLFIGFIRAARERKAGGKLLSEARA</sequence>
<gene>
    <name evidence="1" type="primary">pyrG</name>
    <name type="ordered locus">Smlt1711</name>
</gene>
<comment type="function">
    <text evidence="1">Catalyzes the ATP-dependent amination of UTP to CTP with either L-glutamine or ammonia as the source of nitrogen. Regulates intracellular CTP levels through interactions with the four ribonucleotide triphosphates.</text>
</comment>
<comment type="catalytic activity">
    <reaction evidence="1">
        <text>UTP + L-glutamine + ATP + H2O = CTP + L-glutamate + ADP + phosphate + 2 H(+)</text>
        <dbReference type="Rhea" id="RHEA:26426"/>
        <dbReference type="ChEBI" id="CHEBI:15377"/>
        <dbReference type="ChEBI" id="CHEBI:15378"/>
        <dbReference type="ChEBI" id="CHEBI:29985"/>
        <dbReference type="ChEBI" id="CHEBI:30616"/>
        <dbReference type="ChEBI" id="CHEBI:37563"/>
        <dbReference type="ChEBI" id="CHEBI:43474"/>
        <dbReference type="ChEBI" id="CHEBI:46398"/>
        <dbReference type="ChEBI" id="CHEBI:58359"/>
        <dbReference type="ChEBI" id="CHEBI:456216"/>
        <dbReference type="EC" id="6.3.4.2"/>
    </reaction>
</comment>
<comment type="catalytic activity">
    <reaction evidence="1">
        <text>L-glutamine + H2O = L-glutamate + NH4(+)</text>
        <dbReference type="Rhea" id="RHEA:15889"/>
        <dbReference type="ChEBI" id="CHEBI:15377"/>
        <dbReference type="ChEBI" id="CHEBI:28938"/>
        <dbReference type="ChEBI" id="CHEBI:29985"/>
        <dbReference type="ChEBI" id="CHEBI:58359"/>
    </reaction>
</comment>
<comment type="catalytic activity">
    <reaction evidence="1">
        <text>UTP + NH4(+) + ATP = CTP + ADP + phosphate + 2 H(+)</text>
        <dbReference type="Rhea" id="RHEA:16597"/>
        <dbReference type="ChEBI" id="CHEBI:15378"/>
        <dbReference type="ChEBI" id="CHEBI:28938"/>
        <dbReference type="ChEBI" id="CHEBI:30616"/>
        <dbReference type="ChEBI" id="CHEBI:37563"/>
        <dbReference type="ChEBI" id="CHEBI:43474"/>
        <dbReference type="ChEBI" id="CHEBI:46398"/>
        <dbReference type="ChEBI" id="CHEBI:456216"/>
    </reaction>
</comment>
<comment type="activity regulation">
    <text evidence="1">Allosterically activated by GTP, when glutamine is the substrate; GTP has no effect on the reaction when ammonia is the substrate. The allosteric effector GTP functions by stabilizing the protein conformation that binds the tetrahedral intermediate(s) formed during glutamine hydrolysis. Inhibited by the product CTP, via allosteric rather than competitive inhibition.</text>
</comment>
<comment type="pathway">
    <text evidence="1">Pyrimidine metabolism; CTP biosynthesis via de novo pathway; CTP from UDP: step 2/2.</text>
</comment>
<comment type="subunit">
    <text evidence="1">Homotetramer.</text>
</comment>
<comment type="miscellaneous">
    <text evidence="1">CTPSs have evolved a hybrid strategy for distinguishing between UTP and CTP. The overlapping regions of the product feedback inhibitory and substrate sites recognize a common feature in both compounds, the triphosphate moiety. To differentiate isosteric substrate and product pyrimidine rings, an additional pocket far from the expected kinase/ligase catalytic site, specifically recognizes the cytosine and ribose portions of the product inhibitor.</text>
</comment>
<comment type="similarity">
    <text evidence="1">Belongs to the CTP synthase family.</text>
</comment>
<dbReference type="EC" id="6.3.4.2" evidence="1"/>
<dbReference type="EMBL" id="AM743169">
    <property type="protein sequence ID" value="CAQ45235.1"/>
    <property type="molecule type" value="Genomic_DNA"/>
</dbReference>
<dbReference type="RefSeq" id="WP_005408998.1">
    <property type="nucleotide sequence ID" value="NC_010943.1"/>
</dbReference>
<dbReference type="SMR" id="B2FK84"/>
<dbReference type="MEROPS" id="C26.964"/>
<dbReference type="EnsemblBacteria" id="CAQ45235">
    <property type="protein sequence ID" value="CAQ45235"/>
    <property type="gene ID" value="Smlt1711"/>
</dbReference>
<dbReference type="KEGG" id="sml:Smlt1711"/>
<dbReference type="eggNOG" id="COG0504">
    <property type="taxonomic scope" value="Bacteria"/>
</dbReference>
<dbReference type="HOGENOM" id="CLU_011675_5_0_6"/>
<dbReference type="UniPathway" id="UPA00159">
    <property type="reaction ID" value="UER00277"/>
</dbReference>
<dbReference type="Proteomes" id="UP000008840">
    <property type="component" value="Chromosome"/>
</dbReference>
<dbReference type="GO" id="GO:0005829">
    <property type="term" value="C:cytosol"/>
    <property type="evidence" value="ECO:0007669"/>
    <property type="project" value="TreeGrafter"/>
</dbReference>
<dbReference type="GO" id="GO:0005524">
    <property type="term" value="F:ATP binding"/>
    <property type="evidence" value="ECO:0007669"/>
    <property type="project" value="UniProtKB-KW"/>
</dbReference>
<dbReference type="GO" id="GO:0003883">
    <property type="term" value="F:CTP synthase activity"/>
    <property type="evidence" value="ECO:0007669"/>
    <property type="project" value="UniProtKB-UniRule"/>
</dbReference>
<dbReference type="GO" id="GO:0004359">
    <property type="term" value="F:glutaminase activity"/>
    <property type="evidence" value="ECO:0007669"/>
    <property type="project" value="RHEA"/>
</dbReference>
<dbReference type="GO" id="GO:0042802">
    <property type="term" value="F:identical protein binding"/>
    <property type="evidence" value="ECO:0007669"/>
    <property type="project" value="TreeGrafter"/>
</dbReference>
<dbReference type="GO" id="GO:0046872">
    <property type="term" value="F:metal ion binding"/>
    <property type="evidence" value="ECO:0007669"/>
    <property type="project" value="UniProtKB-KW"/>
</dbReference>
<dbReference type="GO" id="GO:0044210">
    <property type="term" value="P:'de novo' CTP biosynthetic process"/>
    <property type="evidence" value="ECO:0007669"/>
    <property type="project" value="UniProtKB-UniRule"/>
</dbReference>
<dbReference type="GO" id="GO:0019856">
    <property type="term" value="P:pyrimidine nucleobase biosynthetic process"/>
    <property type="evidence" value="ECO:0007669"/>
    <property type="project" value="TreeGrafter"/>
</dbReference>
<dbReference type="CDD" id="cd03113">
    <property type="entry name" value="CTPS_N"/>
    <property type="match status" value="1"/>
</dbReference>
<dbReference type="CDD" id="cd01746">
    <property type="entry name" value="GATase1_CTP_Synthase"/>
    <property type="match status" value="1"/>
</dbReference>
<dbReference type="FunFam" id="3.40.50.300:FF:000009">
    <property type="entry name" value="CTP synthase"/>
    <property type="match status" value="1"/>
</dbReference>
<dbReference type="FunFam" id="3.40.50.880:FF:000002">
    <property type="entry name" value="CTP synthase"/>
    <property type="match status" value="1"/>
</dbReference>
<dbReference type="Gene3D" id="3.40.50.880">
    <property type="match status" value="1"/>
</dbReference>
<dbReference type="Gene3D" id="3.40.50.300">
    <property type="entry name" value="P-loop containing nucleotide triphosphate hydrolases"/>
    <property type="match status" value="1"/>
</dbReference>
<dbReference type="HAMAP" id="MF_01227">
    <property type="entry name" value="PyrG"/>
    <property type="match status" value="1"/>
</dbReference>
<dbReference type="InterPro" id="IPR029062">
    <property type="entry name" value="Class_I_gatase-like"/>
</dbReference>
<dbReference type="InterPro" id="IPR004468">
    <property type="entry name" value="CTP_synthase"/>
</dbReference>
<dbReference type="InterPro" id="IPR017456">
    <property type="entry name" value="CTP_synthase_N"/>
</dbReference>
<dbReference type="InterPro" id="IPR017926">
    <property type="entry name" value="GATASE"/>
</dbReference>
<dbReference type="InterPro" id="IPR033828">
    <property type="entry name" value="GATase1_CTP_Synthase"/>
</dbReference>
<dbReference type="InterPro" id="IPR027417">
    <property type="entry name" value="P-loop_NTPase"/>
</dbReference>
<dbReference type="NCBIfam" id="NF003792">
    <property type="entry name" value="PRK05380.1"/>
    <property type="match status" value="1"/>
</dbReference>
<dbReference type="NCBIfam" id="TIGR00337">
    <property type="entry name" value="PyrG"/>
    <property type="match status" value="1"/>
</dbReference>
<dbReference type="PANTHER" id="PTHR11550">
    <property type="entry name" value="CTP SYNTHASE"/>
    <property type="match status" value="1"/>
</dbReference>
<dbReference type="PANTHER" id="PTHR11550:SF0">
    <property type="entry name" value="CTP SYNTHASE-RELATED"/>
    <property type="match status" value="1"/>
</dbReference>
<dbReference type="Pfam" id="PF06418">
    <property type="entry name" value="CTP_synth_N"/>
    <property type="match status" value="1"/>
</dbReference>
<dbReference type="Pfam" id="PF00117">
    <property type="entry name" value="GATase"/>
    <property type="match status" value="1"/>
</dbReference>
<dbReference type="SUPFAM" id="SSF52317">
    <property type="entry name" value="Class I glutamine amidotransferase-like"/>
    <property type="match status" value="1"/>
</dbReference>
<dbReference type="SUPFAM" id="SSF52540">
    <property type="entry name" value="P-loop containing nucleoside triphosphate hydrolases"/>
    <property type="match status" value="1"/>
</dbReference>
<dbReference type="PROSITE" id="PS51273">
    <property type="entry name" value="GATASE_TYPE_1"/>
    <property type="match status" value="1"/>
</dbReference>
<proteinExistence type="inferred from homology"/>
<evidence type="ECO:0000255" key="1">
    <source>
        <dbReference type="HAMAP-Rule" id="MF_01227"/>
    </source>
</evidence>
<organism>
    <name type="scientific">Stenotrophomonas maltophilia (strain K279a)</name>
    <dbReference type="NCBI Taxonomy" id="522373"/>
    <lineage>
        <taxon>Bacteria</taxon>
        <taxon>Pseudomonadati</taxon>
        <taxon>Pseudomonadota</taxon>
        <taxon>Gammaproteobacteria</taxon>
        <taxon>Lysobacterales</taxon>
        <taxon>Lysobacteraceae</taxon>
        <taxon>Stenotrophomonas</taxon>
        <taxon>Stenotrophomonas maltophilia group</taxon>
    </lineage>
</organism>
<keyword id="KW-0067">ATP-binding</keyword>
<keyword id="KW-0315">Glutamine amidotransferase</keyword>
<keyword id="KW-0436">Ligase</keyword>
<keyword id="KW-0460">Magnesium</keyword>
<keyword id="KW-0479">Metal-binding</keyword>
<keyword id="KW-0547">Nucleotide-binding</keyword>
<keyword id="KW-0665">Pyrimidine biosynthesis</keyword>
<keyword id="KW-1185">Reference proteome</keyword>
<protein>
    <recommendedName>
        <fullName evidence="1">CTP synthase</fullName>
        <ecNumber evidence="1">6.3.4.2</ecNumber>
    </recommendedName>
    <alternativeName>
        <fullName evidence="1">Cytidine 5'-triphosphate synthase</fullName>
    </alternativeName>
    <alternativeName>
        <fullName evidence="1">Cytidine triphosphate synthetase</fullName>
        <shortName evidence="1">CTP synthetase</shortName>
        <shortName evidence="1">CTPS</shortName>
    </alternativeName>
    <alternativeName>
        <fullName evidence="1">UTP--ammonia ligase</fullName>
    </alternativeName>
</protein>
<reference key="1">
    <citation type="journal article" date="2008" name="Genome Biol.">
        <title>The complete genome, comparative and functional analysis of Stenotrophomonas maltophilia reveals an organism heavily shielded by drug resistance determinants.</title>
        <authorList>
            <person name="Crossman L.C."/>
            <person name="Gould V.C."/>
            <person name="Dow J.M."/>
            <person name="Vernikos G.S."/>
            <person name="Okazaki A."/>
            <person name="Sebaihia M."/>
            <person name="Saunders D."/>
            <person name="Arrowsmith C."/>
            <person name="Carver T."/>
            <person name="Peters N."/>
            <person name="Adlem E."/>
            <person name="Kerhornou A."/>
            <person name="Lord A."/>
            <person name="Murphy L."/>
            <person name="Seeger K."/>
            <person name="Squares R."/>
            <person name="Rutter S."/>
            <person name="Quail M.A."/>
            <person name="Rajandream M.A."/>
            <person name="Harris D."/>
            <person name="Churcher C."/>
            <person name="Bentley S.D."/>
            <person name="Parkhill J."/>
            <person name="Thomson N.R."/>
            <person name="Avison M.B."/>
        </authorList>
    </citation>
    <scope>NUCLEOTIDE SEQUENCE [LARGE SCALE GENOMIC DNA]</scope>
    <source>
        <strain>K279a</strain>
    </source>
</reference>
<feature type="chain" id="PRO_1000139591" description="CTP synthase">
    <location>
        <begin position="1"/>
        <end position="554"/>
    </location>
</feature>
<feature type="domain" description="Glutamine amidotransferase type-1" evidence="1">
    <location>
        <begin position="292"/>
        <end position="545"/>
    </location>
</feature>
<feature type="region of interest" description="Amidoligase domain" evidence="1">
    <location>
        <begin position="1"/>
        <end position="265"/>
    </location>
</feature>
<feature type="active site" description="Nucleophile; for glutamine hydrolysis" evidence="1">
    <location>
        <position position="380"/>
    </location>
</feature>
<feature type="active site" evidence="1">
    <location>
        <position position="518"/>
    </location>
</feature>
<feature type="active site" evidence="1">
    <location>
        <position position="520"/>
    </location>
</feature>
<feature type="binding site" evidence="1">
    <location>
        <position position="13"/>
    </location>
    <ligand>
        <name>CTP</name>
        <dbReference type="ChEBI" id="CHEBI:37563"/>
        <note>allosteric inhibitor</note>
    </ligand>
</feature>
<feature type="binding site" evidence="1">
    <location>
        <position position="13"/>
    </location>
    <ligand>
        <name>UTP</name>
        <dbReference type="ChEBI" id="CHEBI:46398"/>
    </ligand>
</feature>
<feature type="binding site" evidence="1">
    <location>
        <begin position="14"/>
        <end position="19"/>
    </location>
    <ligand>
        <name>ATP</name>
        <dbReference type="ChEBI" id="CHEBI:30616"/>
    </ligand>
</feature>
<feature type="binding site" evidence="1">
    <location>
        <position position="71"/>
    </location>
    <ligand>
        <name>Mg(2+)</name>
        <dbReference type="ChEBI" id="CHEBI:18420"/>
    </ligand>
</feature>
<feature type="binding site" evidence="1">
    <location>
        <position position="139"/>
    </location>
    <ligand>
        <name>Mg(2+)</name>
        <dbReference type="ChEBI" id="CHEBI:18420"/>
    </ligand>
</feature>
<feature type="binding site" evidence="1">
    <location>
        <begin position="146"/>
        <end position="148"/>
    </location>
    <ligand>
        <name>CTP</name>
        <dbReference type="ChEBI" id="CHEBI:37563"/>
        <note>allosteric inhibitor</note>
    </ligand>
</feature>
<feature type="binding site" evidence="1">
    <location>
        <begin position="186"/>
        <end position="191"/>
    </location>
    <ligand>
        <name>CTP</name>
        <dbReference type="ChEBI" id="CHEBI:37563"/>
        <note>allosteric inhibitor</note>
    </ligand>
</feature>
<feature type="binding site" evidence="1">
    <location>
        <begin position="186"/>
        <end position="191"/>
    </location>
    <ligand>
        <name>UTP</name>
        <dbReference type="ChEBI" id="CHEBI:46398"/>
    </ligand>
</feature>
<feature type="binding site" evidence="1">
    <location>
        <position position="222"/>
    </location>
    <ligand>
        <name>CTP</name>
        <dbReference type="ChEBI" id="CHEBI:37563"/>
        <note>allosteric inhibitor</note>
    </ligand>
</feature>
<feature type="binding site" evidence="1">
    <location>
        <position position="222"/>
    </location>
    <ligand>
        <name>UTP</name>
        <dbReference type="ChEBI" id="CHEBI:46398"/>
    </ligand>
</feature>
<feature type="binding site" evidence="1">
    <location>
        <position position="353"/>
    </location>
    <ligand>
        <name>L-glutamine</name>
        <dbReference type="ChEBI" id="CHEBI:58359"/>
    </ligand>
</feature>
<feature type="binding site" evidence="1">
    <location>
        <begin position="381"/>
        <end position="384"/>
    </location>
    <ligand>
        <name>L-glutamine</name>
        <dbReference type="ChEBI" id="CHEBI:58359"/>
    </ligand>
</feature>
<feature type="binding site" evidence="1">
    <location>
        <position position="404"/>
    </location>
    <ligand>
        <name>L-glutamine</name>
        <dbReference type="ChEBI" id="CHEBI:58359"/>
    </ligand>
</feature>
<feature type="binding site" evidence="1">
    <location>
        <position position="471"/>
    </location>
    <ligand>
        <name>L-glutamine</name>
        <dbReference type="ChEBI" id="CHEBI:58359"/>
    </ligand>
</feature>
<name>PYRG_STRMK</name>